<proteinExistence type="inferred from homology"/>
<protein>
    <recommendedName>
        <fullName evidence="1">Na(+)-translocating NADH-quinone reductase subunit A</fullName>
        <shortName evidence="1">Na(+)-NQR subunit A</shortName>
        <shortName evidence="1">Na(+)-translocating NQR subunit A</shortName>
        <ecNumber evidence="1">7.2.1.1</ecNumber>
    </recommendedName>
    <alternativeName>
        <fullName evidence="1">NQR complex subunit A</fullName>
    </alternativeName>
    <alternativeName>
        <fullName evidence="1">NQR-1 subunit A</fullName>
    </alternativeName>
</protein>
<comment type="function">
    <text evidence="1">NQR complex catalyzes the reduction of ubiquinone-1 to ubiquinol by two successive reactions, coupled with the transport of Na(+) ions from the cytoplasm to the periplasm. NqrA to NqrE are probably involved in the second step, the conversion of ubisemiquinone to ubiquinol.</text>
</comment>
<comment type="catalytic activity">
    <reaction evidence="1">
        <text>a ubiquinone + n Na(+)(in) + NADH + H(+) = a ubiquinol + n Na(+)(out) + NAD(+)</text>
        <dbReference type="Rhea" id="RHEA:47748"/>
        <dbReference type="Rhea" id="RHEA-COMP:9565"/>
        <dbReference type="Rhea" id="RHEA-COMP:9566"/>
        <dbReference type="ChEBI" id="CHEBI:15378"/>
        <dbReference type="ChEBI" id="CHEBI:16389"/>
        <dbReference type="ChEBI" id="CHEBI:17976"/>
        <dbReference type="ChEBI" id="CHEBI:29101"/>
        <dbReference type="ChEBI" id="CHEBI:57540"/>
        <dbReference type="ChEBI" id="CHEBI:57945"/>
        <dbReference type="EC" id="7.2.1.1"/>
    </reaction>
</comment>
<comment type="subunit">
    <text evidence="1">Composed of six subunits; NqrA, NqrB, NqrC, NqrD, NqrE and NqrF.</text>
</comment>
<comment type="similarity">
    <text evidence="1">Belongs to the NqrA family.</text>
</comment>
<reference key="1">
    <citation type="journal article" date="2008" name="Genome Res.">
        <title>Chlamydia trachomatis: genome sequence analysis of lymphogranuloma venereum isolates.</title>
        <authorList>
            <person name="Thomson N.R."/>
            <person name="Holden M.T.G."/>
            <person name="Carder C."/>
            <person name="Lennard N."/>
            <person name="Lockey S.J."/>
            <person name="Marsh P."/>
            <person name="Skipp P."/>
            <person name="O'Connor C.D."/>
            <person name="Goodhead I."/>
            <person name="Norbertzcak H."/>
            <person name="Harris B."/>
            <person name="Ormond D."/>
            <person name="Rance R."/>
            <person name="Quail M.A."/>
            <person name="Parkhill J."/>
            <person name="Stephens R.S."/>
            <person name="Clarke I.N."/>
        </authorList>
    </citation>
    <scope>NUCLEOTIDE SEQUENCE [LARGE SCALE GENOMIC DNA]</scope>
    <source>
        <strain>UCH-1/proctitis</strain>
    </source>
</reference>
<gene>
    <name evidence="1" type="primary">nqrA</name>
    <name type="ordered locus">CTLon_0002</name>
</gene>
<dbReference type="EC" id="7.2.1.1" evidence="1"/>
<dbReference type="EMBL" id="AM884177">
    <property type="protein sequence ID" value="CAP06400.1"/>
    <property type="molecule type" value="Genomic_DNA"/>
</dbReference>
<dbReference type="RefSeq" id="WP_012263524.1">
    <property type="nucleotide sequence ID" value="NC_010280.2"/>
</dbReference>
<dbReference type="SMR" id="B0BA88"/>
<dbReference type="KEGG" id="ctl:CTLon_0002"/>
<dbReference type="HOGENOM" id="CLU_046656_0_0_0"/>
<dbReference type="Proteomes" id="UP001154401">
    <property type="component" value="Chromosome"/>
</dbReference>
<dbReference type="GO" id="GO:0016655">
    <property type="term" value="F:oxidoreductase activity, acting on NAD(P)H, quinone or similar compound as acceptor"/>
    <property type="evidence" value="ECO:0007669"/>
    <property type="project" value="UniProtKB-UniRule"/>
</dbReference>
<dbReference type="GO" id="GO:0006814">
    <property type="term" value="P:sodium ion transport"/>
    <property type="evidence" value="ECO:0007669"/>
    <property type="project" value="UniProtKB-UniRule"/>
</dbReference>
<dbReference type="HAMAP" id="MF_00425">
    <property type="entry name" value="NqrA"/>
    <property type="match status" value="1"/>
</dbReference>
<dbReference type="InterPro" id="IPR008703">
    <property type="entry name" value="NqrA"/>
</dbReference>
<dbReference type="InterPro" id="IPR056148">
    <property type="entry name" value="NQRA_2nd"/>
</dbReference>
<dbReference type="InterPro" id="IPR022615">
    <property type="entry name" value="NqrA_C_domain"/>
</dbReference>
<dbReference type="InterPro" id="IPR056147">
    <property type="entry name" value="NQRA_N"/>
</dbReference>
<dbReference type="NCBIfam" id="TIGR01936">
    <property type="entry name" value="nqrA"/>
    <property type="match status" value="1"/>
</dbReference>
<dbReference type="NCBIfam" id="NF003758">
    <property type="entry name" value="PRK05352.1-1"/>
    <property type="match status" value="1"/>
</dbReference>
<dbReference type="PANTHER" id="PTHR37839">
    <property type="entry name" value="NA(+)-TRANSLOCATING NADH-QUINONE REDUCTASE SUBUNIT A"/>
    <property type="match status" value="1"/>
</dbReference>
<dbReference type="PANTHER" id="PTHR37839:SF1">
    <property type="entry name" value="NA(+)-TRANSLOCATING NADH-QUINONE REDUCTASE SUBUNIT A"/>
    <property type="match status" value="1"/>
</dbReference>
<dbReference type="Pfam" id="PF24836">
    <property type="entry name" value="NQRA_2nd"/>
    <property type="match status" value="1"/>
</dbReference>
<dbReference type="Pfam" id="PF05896">
    <property type="entry name" value="NQRA_N"/>
    <property type="match status" value="1"/>
</dbReference>
<dbReference type="Pfam" id="PF11973">
    <property type="entry name" value="NQRA_SLBB"/>
    <property type="match status" value="1"/>
</dbReference>
<organism>
    <name type="scientific">Chlamydia trachomatis serovar L2b (strain UCH-1/proctitis)</name>
    <dbReference type="NCBI Taxonomy" id="471473"/>
    <lineage>
        <taxon>Bacteria</taxon>
        <taxon>Pseudomonadati</taxon>
        <taxon>Chlamydiota</taxon>
        <taxon>Chlamydiia</taxon>
        <taxon>Chlamydiales</taxon>
        <taxon>Chlamydiaceae</taxon>
        <taxon>Chlamydia/Chlamydophila group</taxon>
        <taxon>Chlamydia</taxon>
    </lineage>
</organism>
<sequence length="465" mass="51817">MKIVVSRGLDLSLKGAPKESGFCGKVDPTYVSVDLRPFAPLPLEVKVTPGDQVTAGSPLAEYKLFSGVFITSPVDGEVVEIRRGNKRALLEIVIKKKPGISQTKFSYDLQSLTQKDLLEVFKKEGLFALFKQRPFDIPALPTQSPRDVFINLADNRPFTPSVEKHLSLFSSKEDGYYIFVVGVQAIAKLFGLKPHIISTDRLTLPTQDLVSIAHLHTIDGPFPSGSPSTHIHHIARIRNERDVVFTISFQEVLSIGHLFLKGFVLGQQIVALAGSALPPSQRKYLITAKGASFFDLLPKDIFSSDEITLISGDPLTGRLCKKEENPCLGMRDHTITLLPNPKTRESFSFLRLGWNKLTVTRTYLSGFFKRKRVFMDMDTNMHGEKRPIIDAEIYERVSAIPVPVALIIKALETQNFEEACRLGLLEVAPEDFALPTFIDPSKTEMFSIVKESLLRYAKENVVTSS</sequence>
<keyword id="KW-0406">Ion transport</keyword>
<keyword id="KW-0520">NAD</keyword>
<keyword id="KW-0915">Sodium</keyword>
<keyword id="KW-0739">Sodium transport</keyword>
<keyword id="KW-1278">Translocase</keyword>
<keyword id="KW-0813">Transport</keyword>
<keyword id="KW-0830">Ubiquinone</keyword>
<name>NQRA_CHLTB</name>
<accession>B0BA88</accession>
<evidence type="ECO:0000255" key="1">
    <source>
        <dbReference type="HAMAP-Rule" id="MF_00425"/>
    </source>
</evidence>
<feature type="chain" id="PRO_1000124171" description="Na(+)-translocating NADH-quinone reductase subunit A">
    <location>
        <begin position="1"/>
        <end position="465"/>
    </location>
</feature>